<proteinExistence type="evidence at transcript level"/>
<keyword id="KW-0010">Activator</keyword>
<keyword id="KW-0156">Chromatin regulator</keyword>
<keyword id="KW-0539">Nucleus</keyword>
<keyword id="KW-1185">Reference proteome</keyword>
<keyword id="KW-0677">Repeat</keyword>
<keyword id="KW-0678">Repressor</keyword>
<keyword id="KW-0804">Transcription</keyword>
<keyword id="KW-0805">Transcription regulation</keyword>
<keyword id="KW-0833">Ubl conjugation pathway</keyword>
<keyword id="KW-0853">WD repeat</keyword>
<reference key="1">
    <citation type="submission" date="2004-06" db="EMBL/GenBank/DDBJ databases">
        <authorList>
            <consortium name="NIH - Xenopus Gene Collection (XGC) project"/>
        </authorList>
    </citation>
    <scope>NUCLEOTIDE SEQUENCE [LARGE SCALE MRNA]</scope>
    <source>
        <tissue>Embryo</tissue>
    </source>
</reference>
<organism>
    <name type="scientific">Xenopus laevis</name>
    <name type="common">African clawed frog</name>
    <dbReference type="NCBI Taxonomy" id="8355"/>
    <lineage>
        <taxon>Eukaryota</taxon>
        <taxon>Metazoa</taxon>
        <taxon>Chordata</taxon>
        <taxon>Craniata</taxon>
        <taxon>Vertebrata</taxon>
        <taxon>Euteleostomi</taxon>
        <taxon>Amphibia</taxon>
        <taxon>Batrachia</taxon>
        <taxon>Anura</taxon>
        <taxon>Pipoidea</taxon>
        <taxon>Pipidae</taxon>
        <taxon>Xenopodinae</taxon>
        <taxon>Xenopus</taxon>
        <taxon>Xenopus</taxon>
    </lineage>
</organism>
<evidence type="ECO:0000250" key="1"/>
<evidence type="ECO:0000255" key="2">
    <source>
        <dbReference type="PROSITE-ProRule" id="PRU00126"/>
    </source>
</evidence>
<evidence type="ECO:0000256" key="3">
    <source>
        <dbReference type="SAM" id="MobiDB-lite"/>
    </source>
</evidence>
<evidence type="ECO:0000305" key="4"/>
<name>TB1RB_XENLA</name>
<accession>Q6GPC6</accession>
<gene>
    <name type="primary">tbl1xr1-b</name>
    <name type="synonym">tblr1</name>
</gene>
<dbReference type="EMBL" id="BC073215">
    <property type="protein sequence ID" value="AAH73215.1"/>
    <property type="molecule type" value="mRNA"/>
</dbReference>
<dbReference type="RefSeq" id="NP_001090456.1">
    <property type="nucleotide sequence ID" value="NM_001096987.1"/>
</dbReference>
<dbReference type="RefSeq" id="XP_018120115.1">
    <property type="nucleotide sequence ID" value="XM_018264626.1"/>
</dbReference>
<dbReference type="SMR" id="Q6GPC6"/>
<dbReference type="DNASU" id="779369"/>
<dbReference type="GeneID" id="779369"/>
<dbReference type="KEGG" id="xla:779369"/>
<dbReference type="AGR" id="Xenbase:XB-GENE-864821"/>
<dbReference type="CTD" id="779369"/>
<dbReference type="Xenbase" id="XB-GENE-864821">
    <property type="gene designation" value="tbl1xr1.S"/>
</dbReference>
<dbReference type="OMA" id="LASGXSE"/>
<dbReference type="OrthoDB" id="1367865at2759"/>
<dbReference type="Proteomes" id="UP000186698">
    <property type="component" value="Chromosome 5S"/>
</dbReference>
<dbReference type="Bgee" id="779369">
    <property type="expression patterns" value="Expressed in blastula and 19 other cell types or tissues"/>
</dbReference>
<dbReference type="GO" id="GO:0000118">
    <property type="term" value="C:histone deacetylase complex"/>
    <property type="evidence" value="ECO:0000318"/>
    <property type="project" value="GO_Central"/>
</dbReference>
<dbReference type="GO" id="GO:0003714">
    <property type="term" value="F:transcription corepressor activity"/>
    <property type="evidence" value="ECO:0000318"/>
    <property type="project" value="GO_Central"/>
</dbReference>
<dbReference type="GO" id="GO:0006325">
    <property type="term" value="P:chromatin organization"/>
    <property type="evidence" value="ECO:0007669"/>
    <property type="project" value="UniProtKB-KW"/>
</dbReference>
<dbReference type="GO" id="GO:0006357">
    <property type="term" value="P:regulation of transcription by RNA polymerase II"/>
    <property type="evidence" value="ECO:0000318"/>
    <property type="project" value="GO_Central"/>
</dbReference>
<dbReference type="CDD" id="cd00200">
    <property type="entry name" value="WD40"/>
    <property type="match status" value="1"/>
</dbReference>
<dbReference type="FunFam" id="1.20.960.30:FF:000001">
    <property type="entry name" value="F-box-like/WD repeat-containing protein TBL1XR1"/>
    <property type="match status" value="1"/>
</dbReference>
<dbReference type="FunFam" id="2.130.10.10:FF:002234">
    <property type="entry name" value="F-box-like/WD repeat-containing protein TBL1XR1"/>
    <property type="match status" value="1"/>
</dbReference>
<dbReference type="Gene3D" id="1.20.960.30">
    <property type="match status" value="1"/>
</dbReference>
<dbReference type="Gene3D" id="2.130.10.10">
    <property type="entry name" value="YVTN repeat-like/Quinoprotein amine dehydrogenase"/>
    <property type="match status" value="1"/>
</dbReference>
<dbReference type="InterPro" id="IPR045183">
    <property type="entry name" value="Ebi-like"/>
</dbReference>
<dbReference type="InterPro" id="IPR020472">
    <property type="entry name" value="G-protein_beta_WD-40_rep"/>
</dbReference>
<dbReference type="InterPro" id="IPR006594">
    <property type="entry name" value="LisH"/>
</dbReference>
<dbReference type="InterPro" id="IPR015943">
    <property type="entry name" value="WD40/YVTN_repeat-like_dom_sf"/>
</dbReference>
<dbReference type="InterPro" id="IPR019775">
    <property type="entry name" value="WD40_repeat_CS"/>
</dbReference>
<dbReference type="InterPro" id="IPR036322">
    <property type="entry name" value="WD40_repeat_dom_sf"/>
</dbReference>
<dbReference type="InterPro" id="IPR001680">
    <property type="entry name" value="WD40_rpt"/>
</dbReference>
<dbReference type="PANTHER" id="PTHR22846:SF40">
    <property type="entry name" value="F-BOX-LIKE_WD REPEAT-CONTAINING PROTEIN TBL1XR1"/>
    <property type="match status" value="1"/>
</dbReference>
<dbReference type="PANTHER" id="PTHR22846">
    <property type="entry name" value="WD40 REPEAT PROTEIN"/>
    <property type="match status" value="1"/>
</dbReference>
<dbReference type="Pfam" id="PF08513">
    <property type="entry name" value="LisH"/>
    <property type="match status" value="1"/>
</dbReference>
<dbReference type="Pfam" id="PF00400">
    <property type="entry name" value="WD40"/>
    <property type="match status" value="6"/>
</dbReference>
<dbReference type="PRINTS" id="PR00320">
    <property type="entry name" value="GPROTEINBRPT"/>
</dbReference>
<dbReference type="SMART" id="SM00667">
    <property type="entry name" value="LisH"/>
    <property type="match status" value="1"/>
</dbReference>
<dbReference type="SMART" id="SM00320">
    <property type="entry name" value="WD40"/>
    <property type="match status" value="8"/>
</dbReference>
<dbReference type="SUPFAM" id="SSF50978">
    <property type="entry name" value="WD40 repeat-like"/>
    <property type="match status" value="1"/>
</dbReference>
<dbReference type="PROSITE" id="PS50896">
    <property type="entry name" value="LISH"/>
    <property type="match status" value="1"/>
</dbReference>
<dbReference type="PROSITE" id="PS00678">
    <property type="entry name" value="WD_REPEATS_1"/>
    <property type="match status" value="4"/>
</dbReference>
<dbReference type="PROSITE" id="PS50082">
    <property type="entry name" value="WD_REPEATS_2"/>
    <property type="match status" value="6"/>
</dbReference>
<dbReference type="PROSITE" id="PS50294">
    <property type="entry name" value="WD_REPEATS_REGION"/>
    <property type="match status" value="1"/>
</dbReference>
<comment type="function">
    <text evidence="1">F-box-like protein which acts as an integral component of the N-CoR transcriptional corepressor complex. Probably regulates transcription activation mediated by nuclear receptors. May mediate the recruitment of the 19S proteasome complex, leading to the subsequent proteasomal degradation of the N-CoR complex, thereby allowing cofactor exchange and transcription activation (By similarity).</text>
</comment>
<comment type="subunit">
    <text evidence="1">Interacts with heterodimers of rxra and thrb, and this interaction is abrogated by thyroid hormone binding to thrb. Interacts with ncor1 (By similarity).</text>
</comment>
<comment type="subcellular location">
    <subcellularLocation>
        <location evidence="1">Nucleus</location>
    </subcellularLocation>
</comment>
<comment type="domain">
    <text evidence="1">The F-box-like domain is related to the F-box domain, and also functions to recruit ubiquitin E3 ligase complexes.</text>
</comment>
<comment type="similarity">
    <text evidence="4">Belongs to the WD repeat EBI family.</text>
</comment>
<protein>
    <recommendedName>
        <fullName>F-box-like/WD repeat-containing protein TBL1XR1-B</fullName>
    </recommendedName>
    <alternativeName>
        <fullName>Nuclear receptor corepressor/HDAC3 complex subunit TBLR1-B</fullName>
    </alternativeName>
    <alternativeName>
        <fullName>TBL1-related protein 1-B</fullName>
    </alternativeName>
    <alternativeName>
        <fullName>Transducin beta-like 1X-related homolog 1-B</fullName>
    </alternativeName>
</protein>
<feature type="chain" id="PRO_0000051269" description="F-box-like/WD repeat-containing protein TBL1XR1-B">
    <location>
        <begin position="1"/>
        <end position="522"/>
    </location>
</feature>
<feature type="domain" description="LisH" evidence="2">
    <location>
        <begin position="4"/>
        <end position="36"/>
    </location>
</feature>
<feature type="domain" description="F-box-like">
    <location>
        <begin position="41"/>
        <end position="86"/>
    </location>
</feature>
<feature type="repeat" description="WD 1">
    <location>
        <begin position="175"/>
        <end position="214"/>
    </location>
</feature>
<feature type="repeat" description="WD 2">
    <location>
        <begin position="231"/>
        <end position="270"/>
    </location>
</feature>
<feature type="repeat" description="WD 3">
    <location>
        <begin position="272"/>
        <end position="311"/>
    </location>
</feature>
<feature type="repeat" description="WD 4">
    <location>
        <begin position="314"/>
        <end position="352"/>
    </location>
</feature>
<feature type="repeat" description="WD 5">
    <location>
        <begin position="355"/>
        <end position="394"/>
    </location>
</feature>
<feature type="repeat" description="WD 6">
    <location>
        <begin position="397"/>
        <end position="445"/>
    </location>
</feature>
<feature type="repeat" description="WD 7">
    <location>
        <begin position="448"/>
        <end position="487"/>
    </location>
</feature>
<feature type="repeat" description="WD 8">
    <location>
        <begin position="489"/>
        <end position="522"/>
    </location>
</feature>
<feature type="region of interest" description="Disordered" evidence="3">
    <location>
        <begin position="122"/>
        <end position="150"/>
    </location>
</feature>
<feature type="compositionally biased region" description="Polar residues" evidence="3">
    <location>
        <begin position="123"/>
        <end position="141"/>
    </location>
</feature>
<sequence length="522" mass="56285">MSISSDEVNFLVYRYLQESGFSHSAFTFGIESHISQSNINGALVPPAALISIIQKGLQYVEAEVSINEDGTLFDGRPIESLSLIDAVMPDVVQTRQQAYRDKLAQQQQAAAAAAAAAAAAAATSANNQQPPAKNGESTANGEENGGHALANNHTDMMEVDGDVEIPPSKAVVLRGHESEVFICAWNPVSDLLASGSGDSTARIWNLSENSTSGSTQLVLRHCIREGGQDVPSNKDVTSLDWNSEGTLLATGSYDGFARIWTKDGNLASTLGQHKGPIFALKWNKKGNFILSAGVDKTTIIWDAHTGEAKQQFPFHSAPALDVDWQSNNTFASCSTDMCIHVCKLGQDRPIKTFQGHTNEVNAIKWDPTGNLLASCSDDMTLKIWSMKHDTCVHDLQAHNKEIYTIKWSPTGPGTNNPNANLMLASASFDSTVRLWDVDRGICIHTLTKHQEPVYSVAFSPDGRYLASGSFDKCVHIWNTQTGALVHSYRGTGGIFEVCWNAAGDKVGASASDGSVCVLDLRK</sequence>